<organism>
    <name type="scientific">Mus musculus</name>
    <name type="common">Mouse</name>
    <dbReference type="NCBI Taxonomy" id="10090"/>
    <lineage>
        <taxon>Eukaryota</taxon>
        <taxon>Metazoa</taxon>
        <taxon>Chordata</taxon>
        <taxon>Craniata</taxon>
        <taxon>Vertebrata</taxon>
        <taxon>Euteleostomi</taxon>
        <taxon>Mammalia</taxon>
        <taxon>Eutheria</taxon>
        <taxon>Euarchontoglires</taxon>
        <taxon>Glires</taxon>
        <taxon>Rodentia</taxon>
        <taxon>Myomorpha</taxon>
        <taxon>Muroidea</taxon>
        <taxon>Muridae</taxon>
        <taxon>Murinae</taxon>
        <taxon>Mus</taxon>
        <taxon>Mus</taxon>
    </lineage>
</organism>
<keyword id="KW-0007">Acetylation</keyword>
<keyword id="KW-0158">Chromosome</keyword>
<keyword id="KW-0238">DNA-binding</keyword>
<keyword id="KW-0371">Homeobox</keyword>
<keyword id="KW-1017">Isopeptide bond</keyword>
<keyword id="KW-0479">Metal-binding</keyword>
<keyword id="KW-0539">Nucleus</keyword>
<keyword id="KW-0597">Phosphoprotein</keyword>
<keyword id="KW-1185">Reference proteome</keyword>
<keyword id="KW-0677">Repeat</keyword>
<keyword id="KW-0678">Repressor</keyword>
<keyword id="KW-0804">Transcription</keyword>
<keyword id="KW-0805">Transcription regulation</keyword>
<keyword id="KW-0832">Ubl conjugation</keyword>
<keyword id="KW-0862">Zinc</keyword>
<keyword id="KW-0863">Zinc-finger</keyword>
<feature type="chain" id="PRO_0000047237" description="Zinc finger E-box-binding homeobox 2">
    <location>
        <begin position="1"/>
        <end position="1215"/>
    </location>
</feature>
<feature type="zinc finger region" description="C2H2-type 1" evidence="3">
    <location>
        <begin position="211"/>
        <end position="234"/>
    </location>
</feature>
<feature type="zinc finger region" description="C2H2-type 2" evidence="3">
    <location>
        <begin position="241"/>
        <end position="263"/>
    </location>
</feature>
<feature type="zinc finger region" description="C2H2-type 3" evidence="3">
    <location>
        <begin position="282"/>
        <end position="304"/>
    </location>
</feature>
<feature type="zinc finger region" description="C2H2-type 4; atypical" evidence="3">
    <location>
        <begin position="310"/>
        <end position="334"/>
    </location>
</feature>
<feature type="zinc finger region" description="C2H2-type 5; degenerate" evidence="3">
    <location>
        <begin position="581"/>
        <end position="605"/>
    </location>
</feature>
<feature type="DNA-binding region" description="Homeobox; atypical">
    <location>
        <begin position="644"/>
        <end position="703"/>
    </location>
</feature>
<feature type="zinc finger region" description="C2H2-type 6" evidence="3">
    <location>
        <begin position="999"/>
        <end position="1021"/>
    </location>
</feature>
<feature type="zinc finger region" description="C2H2-type 7" evidence="3">
    <location>
        <begin position="1027"/>
        <end position="1049"/>
    </location>
</feature>
<feature type="zinc finger region" description="C2H2-type 8; atypical" evidence="3">
    <location>
        <begin position="1055"/>
        <end position="1076"/>
    </location>
</feature>
<feature type="region of interest" description="Disordered" evidence="4">
    <location>
        <begin position="1"/>
        <end position="111"/>
    </location>
</feature>
<feature type="region of interest" description="SMAD-MH2 binding domain">
    <location>
        <begin position="437"/>
        <end position="487"/>
    </location>
</feature>
<feature type="region of interest" description="Disordered" evidence="4">
    <location>
        <begin position="702"/>
        <end position="740"/>
    </location>
</feature>
<feature type="region of interest" description="Disordered" evidence="4">
    <location>
        <begin position="772"/>
        <end position="811"/>
    </location>
</feature>
<feature type="region of interest" description="Disordered" evidence="4">
    <location>
        <begin position="1117"/>
        <end position="1215"/>
    </location>
</feature>
<feature type="compositionally biased region" description="Basic residues" evidence="4">
    <location>
        <begin position="12"/>
        <end position="24"/>
    </location>
</feature>
<feature type="compositionally biased region" description="Polar residues" evidence="4">
    <location>
        <begin position="57"/>
        <end position="74"/>
    </location>
</feature>
<feature type="compositionally biased region" description="Basic and acidic residues" evidence="4">
    <location>
        <begin position="89"/>
        <end position="98"/>
    </location>
</feature>
<feature type="compositionally biased region" description="Low complexity" evidence="4">
    <location>
        <begin position="780"/>
        <end position="808"/>
    </location>
</feature>
<feature type="compositionally biased region" description="Basic and acidic residues" evidence="4">
    <location>
        <begin position="1127"/>
        <end position="1149"/>
    </location>
</feature>
<feature type="compositionally biased region" description="Acidic residues" evidence="4">
    <location>
        <begin position="1157"/>
        <end position="1167"/>
    </location>
</feature>
<feature type="compositionally biased region" description="Basic and acidic residues" evidence="4">
    <location>
        <begin position="1168"/>
        <end position="1179"/>
    </location>
</feature>
<feature type="compositionally biased region" description="Basic and acidic residues" evidence="4">
    <location>
        <begin position="1186"/>
        <end position="1205"/>
    </location>
</feature>
<feature type="compositionally biased region" description="Acidic residues" evidence="4">
    <location>
        <begin position="1206"/>
        <end position="1215"/>
    </location>
</feature>
<feature type="modified residue" description="Phosphoserine" evidence="2">
    <location>
        <position position="142"/>
    </location>
</feature>
<feature type="modified residue" description="Phosphoserine" evidence="7">
    <location>
        <position position="356"/>
    </location>
</feature>
<feature type="modified residue" description="Phosphoserine" evidence="7">
    <location>
        <position position="360"/>
    </location>
</feature>
<feature type="modified residue" description="Phosphoserine" evidence="7">
    <location>
        <position position="364"/>
    </location>
</feature>
<feature type="modified residue" description="N6-acetyllysine" evidence="2">
    <location>
        <position position="377"/>
    </location>
</feature>
<feature type="modified residue" description="Phosphoserine" evidence="2">
    <location>
        <position position="647"/>
    </location>
</feature>
<feature type="modified residue" description="Phosphoserine" evidence="7">
    <location>
        <position position="731"/>
    </location>
</feature>
<feature type="modified residue" description="Phosphoserine" evidence="7">
    <location>
        <position position="780"/>
    </location>
</feature>
<feature type="modified residue" description="Phosphothreonine" evidence="2">
    <location>
        <position position="782"/>
    </location>
</feature>
<feature type="modified residue" description="Phosphoserine" evidence="7">
    <location>
        <position position="784"/>
    </location>
</feature>
<feature type="modified residue" description="Phosphoserine" evidence="2">
    <location>
        <position position="1122"/>
    </location>
</feature>
<feature type="modified residue" description="Phosphoserine" evidence="7">
    <location>
        <position position="1124"/>
    </location>
</feature>
<feature type="modified residue" description="Phosphoserine" evidence="7">
    <location>
        <position position="1203"/>
    </location>
</feature>
<feature type="cross-link" description="Glycyl lysine isopeptide (Lys-Gly) (interchain with G-Cter in SUMO); alternate" evidence="1">
    <location>
        <position position="391"/>
    </location>
</feature>
<feature type="cross-link" description="Glycyl lysine isopeptide (Lys-Gly) (interchain with G-Cter in SUMO2); alternate" evidence="2">
    <location>
        <position position="391"/>
    </location>
</feature>
<feature type="cross-link" description="Glycyl lysine isopeptide (Lys-Gly) (interchain with G-Cter in SUMO2)" evidence="2">
    <location>
        <position position="479"/>
    </location>
</feature>
<feature type="cross-link" description="Glycyl lysine isopeptide (Lys-Gly) (interchain with G-Cter in SUMO2)" evidence="2">
    <location>
        <position position="555"/>
    </location>
</feature>
<feature type="cross-link" description="Glycyl lysine isopeptide (Lys-Gly) (interchain with G-Cter in SUMO2)" evidence="2">
    <location>
        <position position="611"/>
    </location>
</feature>
<feature type="cross-link" description="Glycyl lysine isopeptide (Lys-Gly) (interchain with G-Cter in SUMO2)" evidence="2">
    <location>
        <position position="632"/>
    </location>
</feature>
<feature type="cross-link" description="Glycyl lysine isopeptide (Lys-Gly) (interchain with G-Cter in SUMO2)" evidence="2">
    <location>
        <position position="713"/>
    </location>
</feature>
<feature type="cross-link" description="Glycyl lysine isopeptide (Lys-Gly) (interchain with G-Cter in SUMO); alternate" evidence="1">
    <location>
        <position position="866"/>
    </location>
</feature>
<feature type="cross-link" description="Glycyl lysine isopeptide (Lys-Gly) (interchain with G-Cter in SUMO2); alternate" evidence="2">
    <location>
        <position position="866"/>
    </location>
</feature>
<feature type="sequence conflict" description="In Ref. 1; AAD56590." evidence="6" ref="1">
    <original>E</original>
    <variation>G</variation>
    <location>
        <position position="1102"/>
    </location>
</feature>
<feature type="sequence conflict" description="In Ref. 1; AAD56590." evidence="6" ref="1">
    <original>E</original>
    <variation>G</variation>
    <location>
        <position position="1215"/>
    </location>
</feature>
<comment type="function">
    <text evidence="2">Transcriptional inhibitor that binds to DNA sequence 5'-CACCT-3' in different promoters. Represses transcription of E-cadherin. Represses expression of MEOX2.</text>
</comment>
<comment type="subunit">
    <text evidence="2">Interacts with CBX4 and CTBP1 (By similarity). Binds activated SMAD1, activated SMAD2 and activated SMAD3; binding with SMAD4 is not detected (By similarity).</text>
</comment>
<comment type="subcellular location">
    <subcellularLocation>
        <location evidence="2">Nucleus</location>
    </subcellularLocation>
    <subcellularLocation>
        <location evidence="2">Chromosome</location>
    </subcellularLocation>
</comment>
<comment type="PTM">
    <text evidence="2">Sumoylation on Lys-391 and Lys-866 is promoted by the E3 SUMO-protein ligase CBX4, and impairs interaction with CTBP1 and transcription repression activity.</text>
</comment>
<comment type="similarity">
    <text evidence="6">Belongs to the delta-EF1/ZFH-1 C2H2-type zinc-finger family.</text>
</comment>
<dbReference type="EMBL" id="AF033116">
    <property type="protein sequence ID" value="AAD56590.1"/>
    <property type="molecule type" value="mRNA"/>
</dbReference>
<dbReference type="EMBL" id="AL929120">
    <property type="status" value="NOT_ANNOTATED_CDS"/>
    <property type="molecule type" value="Genomic_DNA"/>
</dbReference>
<dbReference type="EMBL" id="AL935127">
    <property type="status" value="NOT_ANNOTATED_CDS"/>
    <property type="molecule type" value="Genomic_DNA"/>
</dbReference>
<dbReference type="EMBL" id="BC060699">
    <property type="protein sequence ID" value="AAH60699.1"/>
    <property type="molecule type" value="mRNA"/>
</dbReference>
<dbReference type="CCDS" id="CCDS16020.1"/>
<dbReference type="RefSeq" id="NP_001276450.1">
    <property type="nucleotide sequence ID" value="NM_001289521.2"/>
</dbReference>
<dbReference type="RefSeq" id="NP_001342217.1">
    <property type="nucleotide sequence ID" value="NM_001355288.2"/>
</dbReference>
<dbReference type="RefSeq" id="NP_001342218.1">
    <property type="nucleotide sequence ID" value="NM_001355289.2"/>
</dbReference>
<dbReference type="RefSeq" id="NP_001342219.1">
    <property type="nucleotide sequence ID" value="NM_001355290.2"/>
</dbReference>
<dbReference type="RefSeq" id="NP_001342220.1">
    <property type="nucleotide sequence ID" value="NM_001355291.2"/>
</dbReference>
<dbReference type="RefSeq" id="NP_056568.2">
    <property type="nucleotide sequence ID" value="NM_015753.4"/>
</dbReference>
<dbReference type="RefSeq" id="XP_011237404.1">
    <property type="nucleotide sequence ID" value="XM_011239102.2"/>
</dbReference>
<dbReference type="RefSeq" id="XP_017173550.1">
    <property type="nucleotide sequence ID" value="XM_017318061.1"/>
</dbReference>
<dbReference type="RefSeq" id="XP_017173552.1">
    <property type="nucleotide sequence ID" value="XM_017318063.1"/>
</dbReference>
<dbReference type="RefSeq" id="XP_017173554.1">
    <property type="nucleotide sequence ID" value="XM_017318065.1"/>
</dbReference>
<dbReference type="BMRB" id="Q9R0G7"/>
<dbReference type="SMR" id="Q9R0G7"/>
<dbReference type="BioGRID" id="204915">
    <property type="interactions" value="17"/>
</dbReference>
<dbReference type="FunCoup" id="Q9R0G7">
    <property type="interactions" value="3292"/>
</dbReference>
<dbReference type="IntAct" id="Q9R0G7">
    <property type="interactions" value="2"/>
</dbReference>
<dbReference type="MINT" id="Q9R0G7"/>
<dbReference type="STRING" id="10090.ENSMUSP00000134849"/>
<dbReference type="GlyGen" id="Q9R0G7">
    <property type="glycosylation" value="4 sites, 1 N-linked glycan (1 site), 1 O-linked glycan (3 sites)"/>
</dbReference>
<dbReference type="iPTMnet" id="Q9R0G7"/>
<dbReference type="PhosphoSitePlus" id="Q9R0G7"/>
<dbReference type="SwissPalm" id="Q9R0G7"/>
<dbReference type="jPOST" id="Q9R0G7"/>
<dbReference type="PaxDb" id="10090-ENSMUSP00000069685"/>
<dbReference type="ProteomicsDB" id="302125"/>
<dbReference type="Pumba" id="Q9R0G7"/>
<dbReference type="Antibodypedia" id="18810">
    <property type="antibodies" value="665 antibodies from 41 providers"/>
</dbReference>
<dbReference type="DNASU" id="24136"/>
<dbReference type="Ensembl" id="ENSMUST00000068415.11">
    <property type="protein sequence ID" value="ENSMUSP00000069685.5"/>
    <property type="gene ID" value="ENSMUSG00000026872.19"/>
</dbReference>
<dbReference type="Ensembl" id="ENSMUST00000176438.9">
    <property type="protein sequence ID" value="ENSMUSP00000134849.2"/>
    <property type="gene ID" value="ENSMUSG00000026872.19"/>
</dbReference>
<dbReference type="Ensembl" id="ENSMUST00000177302.8">
    <property type="protein sequence ID" value="ENSMUSP00000134747.2"/>
    <property type="gene ID" value="ENSMUSG00000026872.19"/>
</dbReference>
<dbReference type="GeneID" id="24136"/>
<dbReference type="KEGG" id="mmu:24136"/>
<dbReference type="UCSC" id="uc008jpc.2">
    <property type="organism name" value="mouse"/>
</dbReference>
<dbReference type="AGR" id="MGI:1344407"/>
<dbReference type="CTD" id="9839"/>
<dbReference type="MGI" id="MGI:1344407">
    <property type="gene designation" value="Zeb2"/>
</dbReference>
<dbReference type="VEuPathDB" id="HostDB:ENSMUSG00000026872"/>
<dbReference type="eggNOG" id="KOG3623">
    <property type="taxonomic scope" value="Eukaryota"/>
</dbReference>
<dbReference type="GeneTree" id="ENSGT00950000183208"/>
<dbReference type="InParanoid" id="Q9R0G7"/>
<dbReference type="OMA" id="QENMFTP"/>
<dbReference type="PhylomeDB" id="Q9R0G7"/>
<dbReference type="TreeFam" id="TF331759"/>
<dbReference type="Reactome" id="R-MMU-9762293">
    <property type="pathway name" value="Regulation of CDH11 gene transcription"/>
</dbReference>
<dbReference type="BioGRID-ORCS" id="24136">
    <property type="hits" value="16 hits in 83 CRISPR screens"/>
</dbReference>
<dbReference type="ChiTaRS" id="Zeb2">
    <property type="organism name" value="mouse"/>
</dbReference>
<dbReference type="PRO" id="PR:Q9R0G7"/>
<dbReference type="Proteomes" id="UP000000589">
    <property type="component" value="Chromosome 2"/>
</dbReference>
<dbReference type="RNAct" id="Q9R0G7">
    <property type="molecule type" value="protein"/>
</dbReference>
<dbReference type="Bgee" id="ENSMUSG00000026872">
    <property type="expression patterns" value="Expressed in rostral migratory stream and 294 other cell types or tissues"/>
</dbReference>
<dbReference type="ExpressionAtlas" id="Q9R0G7">
    <property type="expression patterns" value="baseline and differential"/>
</dbReference>
<dbReference type="GO" id="GO:0000785">
    <property type="term" value="C:chromatin"/>
    <property type="evidence" value="ECO:0007669"/>
    <property type="project" value="Ensembl"/>
</dbReference>
<dbReference type="GO" id="GO:0005730">
    <property type="term" value="C:nucleolus"/>
    <property type="evidence" value="ECO:0007669"/>
    <property type="project" value="Ensembl"/>
</dbReference>
<dbReference type="GO" id="GO:0005654">
    <property type="term" value="C:nucleoplasm"/>
    <property type="evidence" value="ECO:0000304"/>
    <property type="project" value="Reactome"/>
</dbReference>
<dbReference type="GO" id="GO:0005634">
    <property type="term" value="C:nucleus"/>
    <property type="evidence" value="ECO:0000314"/>
    <property type="project" value="BHF-UCL"/>
</dbReference>
<dbReference type="GO" id="GO:0005886">
    <property type="term" value="C:plasma membrane"/>
    <property type="evidence" value="ECO:0007669"/>
    <property type="project" value="Ensembl"/>
</dbReference>
<dbReference type="GO" id="GO:0001228">
    <property type="term" value="F:DNA-binding transcription activator activity, RNA polymerase II-specific"/>
    <property type="evidence" value="ECO:0000315"/>
    <property type="project" value="MGI"/>
</dbReference>
<dbReference type="GO" id="GO:0001227">
    <property type="term" value="F:DNA-binding transcription repressor activity, RNA polymerase II-specific"/>
    <property type="evidence" value="ECO:0007669"/>
    <property type="project" value="Ensembl"/>
</dbReference>
<dbReference type="GO" id="GO:0070412">
    <property type="term" value="F:R-SMAD binding"/>
    <property type="evidence" value="ECO:0000314"/>
    <property type="project" value="MGI"/>
</dbReference>
<dbReference type="GO" id="GO:0000978">
    <property type="term" value="F:RNA polymerase II cis-regulatory region sequence-specific DNA binding"/>
    <property type="evidence" value="ECO:0007669"/>
    <property type="project" value="Ensembl"/>
</dbReference>
<dbReference type="GO" id="GO:0008270">
    <property type="term" value="F:zinc ion binding"/>
    <property type="evidence" value="ECO:0007669"/>
    <property type="project" value="UniProtKB-KW"/>
</dbReference>
<dbReference type="GO" id="GO:0048143">
    <property type="term" value="P:astrocyte activation"/>
    <property type="evidence" value="ECO:0007669"/>
    <property type="project" value="Ensembl"/>
</dbReference>
<dbReference type="GO" id="GO:0021846">
    <property type="term" value="P:cell proliferation in forebrain"/>
    <property type="evidence" value="ECO:0000315"/>
    <property type="project" value="MGI"/>
</dbReference>
<dbReference type="GO" id="GO:0007417">
    <property type="term" value="P:central nervous system development"/>
    <property type="evidence" value="ECO:0000316"/>
    <property type="project" value="MGI"/>
</dbReference>
<dbReference type="GO" id="GO:0048668">
    <property type="term" value="P:collateral sprouting"/>
    <property type="evidence" value="ECO:0000315"/>
    <property type="project" value="MGI"/>
</dbReference>
<dbReference type="GO" id="GO:0021540">
    <property type="term" value="P:corpus callosum morphogenesis"/>
    <property type="evidence" value="ECO:0000315"/>
    <property type="project" value="MGI"/>
</dbReference>
<dbReference type="GO" id="GO:0021957">
    <property type="term" value="P:corticospinal tract morphogenesis"/>
    <property type="evidence" value="ECO:0000315"/>
    <property type="project" value="MGI"/>
</dbReference>
<dbReference type="GO" id="GO:0048066">
    <property type="term" value="P:developmental pigmentation"/>
    <property type="evidence" value="ECO:0000315"/>
    <property type="project" value="BHF-UCL"/>
</dbReference>
<dbReference type="GO" id="GO:0048598">
    <property type="term" value="P:embryonic morphogenesis"/>
    <property type="evidence" value="ECO:0000316"/>
    <property type="project" value="MGI"/>
</dbReference>
<dbReference type="GO" id="GO:0043542">
    <property type="term" value="P:endothelial cell migration"/>
    <property type="evidence" value="ECO:0007669"/>
    <property type="project" value="Ensembl"/>
</dbReference>
<dbReference type="GO" id="GO:0001935">
    <property type="term" value="P:endothelial cell proliferation"/>
    <property type="evidence" value="ECO:0007669"/>
    <property type="project" value="Ensembl"/>
</dbReference>
<dbReference type="GO" id="GO:0072537">
    <property type="term" value="P:fibroblast activation"/>
    <property type="evidence" value="ECO:0007669"/>
    <property type="project" value="Ensembl"/>
</dbReference>
<dbReference type="GO" id="GO:0021766">
    <property type="term" value="P:hippocampus development"/>
    <property type="evidence" value="ECO:0000315"/>
    <property type="project" value="MGI"/>
</dbReference>
<dbReference type="GO" id="GO:0061373">
    <property type="term" value="P:mammillary axonal complex development"/>
    <property type="evidence" value="ECO:0000315"/>
    <property type="project" value="MGI"/>
</dbReference>
<dbReference type="GO" id="GO:0097324">
    <property type="term" value="P:melanocyte migration"/>
    <property type="evidence" value="ECO:0000315"/>
    <property type="project" value="BHF-UCL"/>
</dbReference>
<dbReference type="GO" id="GO:0036446">
    <property type="term" value="P:myofibroblast differentiation"/>
    <property type="evidence" value="ECO:0007669"/>
    <property type="project" value="Ensembl"/>
</dbReference>
<dbReference type="GO" id="GO:0010764">
    <property type="term" value="P:negative regulation of fibroblast migration"/>
    <property type="evidence" value="ECO:0007669"/>
    <property type="project" value="Ensembl"/>
</dbReference>
<dbReference type="GO" id="GO:0000122">
    <property type="term" value="P:negative regulation of transcription by RNA polymerase II"/>
    <property type="evidence" value="ECO:0000315"/>
    <property type="project" value="BHF-UCL"/>
</dbReference>
<dbReference type="GO" id="GO:0001755">
    <property type="term" value="P:neural crest cell migration"/>
    <property type="evidence" value="ECO:0000315"/>
    <property type="project" value="MGI"/>
</dbReference>
<dbReference type="GO" id="GO:0001843">
    <property type="term" value="P:neural tube closure"/>
    <property type="evidence" value="ECO:0000315"/>
    <property type="project" value="MGI"/>
</dbReference>
<dbReference type="GO" id="GO:0050772">
    <property type="term" value="P:positive regulation of axonogenesis"/>
    <property type="evidence" value="ECO:0000315"/>
    <property type="project" value="MGI"/>
</dbReference>
<dbReference type="GO" id="GO:0090263">
    <property type="term" value="P:positive regulation of canonical Wnt signaling pathway"/>
    <property type="evidence" value="ECO:0007669"/>
    <property type="project" value="Ensembl"/>
</dbReference>
<dbReference type="GO" id="GO:1902748">
    <property type="term" value="P:positive regulation of lens fiber cell differentiation"/>
    <property type="evidence" value="ECO:0000315"/>
    <property type="project" value="UniProtKB"/>
</dbReference>
<dbReference type="GO" id="GO:0048023">
    <property type="term" value="P:positive regulation of melanin biosynthetic process"/>
    <property type="evidence" value="ECO:0000305"/>
    <property type="project" value="BHF-UCL"/>
</dbReference>
<dbReference type="GO" id="GO:0045636">
    <property type="term" value="P:positive regulation of melanocyte differentiation"/>
    <property type="evidence" value="ECO:0000315"/>
    <property type="project" value="BHF-UCL"/>
</dbReference>
<dbReference type="GO" id="GO:1904330">
    <property type="term" value="P:positive regulation of myofibroblast contraction"/>
    <property type="evidence" value="ECO:0007669"/>
    <property type="project" value="Ensembl"/>
</dbReference>
<dbReference type="GO" id="GO:0045944">
    <property type="term" value="P:positive regulation of transcription by RNA polymerase II"/>
    <property type="evidence" value="ECO:0000315"/>
    <property type="project" value="BHF-UCL"/>
</dbReference>
<dbReference type="GO" id="GO:0030511">
    <property type="term" value="P:positive regulation of transforming growth factor beta receptor signaling pathway"/>
    <property type="evidence" value="ECO:0007669"/>
    <property type="project" value="Ensembl"/>
</dbReference>
<dbReference type="GO" id="GO:0030177">
    <property type="term" value="P:positive regulation of Wnt signaling pathway"/>
    <property type="evidence" value="ECO:0000315"/>
    <property type="project" value="MGI"/>
</dbReference>
<dbReference type="GO" id="GO:0070269">
    <property type="term" value="P:pyroptotic inflammatory response"/>
    <property type="evidence" value="ECO:0007669"/>
    <property type="project" value="Ensembl"/>
</dbReference>
<dbReference type="GO" id="GO:1905603">
    <property type="term" value="P:regulation of blood-brain barrier permeability"/>
    <property type="evidence" value="ECO:0007669"/>
    <property type="project" value="Ensembl"/>
</dbReference>
<dbReference type="GO" id="GO:1903056">
    <property type="term" value="P:regulation of melanosome organization"/>
    <property type="evidence" value="ECO:0000315"/>
    <property type="project" value="BHF-UCL"/>
</dbReference>
<dbReference type="GO" id="GO:1904520">
    <property type="term" value="P:regulation of myofibroblast cell apoptotic process"/>
    <property type="evidence" value="ECO:0007669"/>
    <property type="project" value="Ensembl"/>
</dbReference>
<dbReference type="GO" id="GO:0090649">
    <property type="term" value="P:response to oxygen-glucose deprivation"/>
    <property type="evidence" value="ECO:0007669"/>
    <property type="project" value="Ensembl"/>
</dbReference>
<dbReference type="GO" id="GO:0001756">
    <property type="term" value="P:somitogenesis"/>
    <property type="evidence" value="ECO:0000315"/>
    <property type="project" value="MGI"/>
</dbReference>
<dbReference type="GO" id="GO:0043149">
    <property type="term" value="P:stress fiber assembly"/>
    <property type="evidence" value="ECO:0007669"/>
    <property type="project" value="Ensembl"/>
</dbReference>
<dbReference type="FunFam" id="3.30.160.60:FF:000013">
    <property type="entry name" value="Putative zinc finger E-box-binding homeobox 2"/>
    <property type="match status" value="2"/>
</dbReference>
<dbReference type="FunFam" id="3.30.160.60:FF:000082">
    <property type="entry name" value="Putative zinc finger E-box-binding homeobox 2"/>
    <property type="match status" value="1"/>
</dbReference>
<dbReference type="FunFam" id="1.10.10.60:FF:000105">
    <property type="entry name" value="Zinc finger E-box binding homeobox 2"/>
    <property type="match status" value="1"/>
</dbReference>
<dbReference type="FunFam" id="3.30.160.60:FF:000744">
    <property type="entry name" value="zinc finger E-box-binding homeobox 1"/>
    <property type="match status" value="1"/>
</dbReference>
<dbReference type="FunFam" id="3.30.160.60:FF:000117">
    <property type="entry name" value="Zinc finger E-box-binding homeobox 2 isoform 1"/>
    <property type="match status" value="1"/>
</dbReference>
<dbReference type="FunFam" id="3.30.160.60:FF:000145">
    <property type="entry name" value="Zinc finger protein 574"/>
    <property type="match status" value="1"/>
</dbReference>
<dbReference type="Gene3D" id="3.30.160.60">
    <property type="entry name" value="Classic Zinc Finger"/>
    <property type="match status" value="6"/>
</dbReference>
<dbReference type="Gene3D" id="1.10.10.60">
    <property type="entry name" value="Homeodomain-like"/>
    <property type="match status" value="1"/>
</dbReference>
<dbReference type="InterPro" id="IPR008598">
    <property type="entry name" value="Di19_Zn-bd"/>
</dbReference>
<dbReference type="InterPro" id="IPR001356">
    <property type="entry name" value="HD"/>
</dbReference>
<dbReference type="InterPro" id="IPR009057">
    <property type="entry name" value="Homeodomain-like_sf"/>
</dbReference>
<dbReference type="InterPro" id="IPR036236">
    <property type="entry name" value="Znf_C2H2_sf"/>
</dbReference>
<dbReference type="InterPro" id="IPR013087">
    <property type="entry name" value="Znf_C2H2_type"/>
</dbReference>
<dbReference type="InterPro" id="IPR051574">
    <property type="entry name" value="ZnF_E-box_Homeobox"/>
</dbReference>
<dbReference type="PANTHER" id="PTHR24391">
    <property type="entry name" value="HISTONE H4 TRANSCRIPTION FACTOR-RELATED"/>
    <property type="match status" value="1"/>
</dbReference>
<dbReference type="PANTHER" id="PTHR24391:SF11">
    <property type="entry name" value="ZINC FINGER E-BOX-BINDING HOMEOBOX 2"/>
    <property type="match status" value="1"/>
</dbReference>
<dbReference type="Pfam" id="PF00096">
    <property type="entry name" value="zf-C2H2"/>
    <property type="match status" value="4"/>
</dbReference>
<dbReference type="Pfam" id="PF05605">
    <property type="entry name" value="zf-Di19"/>
    <property type="match status" value="1"/>
</dbReference>
<dbReference type="SMART" id="SM00389">
    <property type="entry name" value="HOX"/>
    <property type="match status" value="1"/>
</dbReference>
<dbReference type="SMART" id="SM00355">
    <property type="entry name" value="ZnF_C2H2"/>
    <property type="match status" value="8"/>
</dbReference>
<dbReference type="SUPFAM" id="SSF57667">
    <property type="entry name" value="beta-beta-alpha zinc fingers"/>
    <property type="match status" value="4"/>
</dbReference>
<dbReference type="SUPFAM" id="SSF46689">
    <property type="entry name" value="Homeodomain-like"/>
    <property type="match status" value="1"/>
</dbReference>
<dbReference type="PROSITE" id="PS00028">
    <property type="entry name" value="ZINC_FINGER_C2H2_1"/>
    <property type="match status" value="5"/>
</dbReference>
<dbReference type="PROSITE" id="PS50157">
    <property type="entry name" value="ZINC_FINGER_C2H2_2"/>
    <property type="match status" value="6"/>
</dbReference>
<proteinExistence type="evidence at protein level"/>
<accession>Q9R0G7</accession>
<accession>Q6P9M5</accession>
<evidence type="ECO:0000250" key="1"/>
<evidence type="ECO:0000250" key="2">
    <source>
        <dbReference type="UniProtKB" id="O60315"/>
    </source>
</evidence>
<evidence type="ECO:0000255" key="3">
    <source>
        <dbReference type="PROSITE-ProRule" id="PRU00042"/>
    </source>
</evidence>
<evidence type="ECO:0000256" key="4">
    <source>
        <dbReference type="SAM" id="MobiDB-lite"/>
    </source>
</evidence>
<evidence type="ECO:0000303" key="5">
    <source>
    </source>
</evidence>
<evidence type="ECO:0000305" key="6"/>
<evidence type="ECO:0007744" key="7">
    <source>
    </source>
</evidence>
<protein>
    <recommendedName>
        <fullName>Zinc finger E-box-binding homeobox 2</fullName>
    </recommendedName>
    <alternativeName>
        <fullName evidence="5">Smad-interacting protein 1</fullName>
    </alternativeName>
    <alternativeName>
        <fullName>Zinc finger homeobox protein 1b</fullName>
    </alternativeName>
</protein>
<name>ZEB2_MOUSE</name>
<gene>
    <name type="primary">Zeb2</name>
    <name evidence="5" type="synonym">Sip1</name>
    <name type="synonym">Zfhx1b</name>
    <name type="synonym">Zfx1b</name>
</gene>
<sequence>MKQPIMADGPRCKRRKQANPRRKNVVNYDNVVDAGSETDEEDKLHIAEDDSLANPLDQDTSPASMPNHESSPHMSQGLLPREEEEEELRESVVEHSWHSGEILQASVAGPEEMKEDYDAMGPEATIQTTINNGTVKNANCTSDFEEYFAKRKLEERDGHAVSIEEYLQRSDTAIIYPEAPEELSRLGTPEANGQEENDLPPGTPDAFAQLLTCPYCDRGYKRLTSLKEHIKYRHEKNEENFSCPLCSYTFAYRTQLERHMVTHKPGTDQHQMLTQGAGNRKFKCTECGKAFKYKHHLKEHLRIHSGEKPYECPNCKKRFSHSGSYSSHISSKKCIGLISVNGRMRNNIKTGSSPNSVSSSPTNSAITQLRNKLENGKPLSMSEQTGLLKIKTEPLDFNDYKVLMATHGFSGSSPFMNGGLGATSPLGVHPSAQSPMQHLGVGMEAPLLGFPTMNSNLSEVQKVLQIVDNTVSRQKMDCKTEDISKLKGYHMKDPCSQPEEQGVTSPNIPPVGLPVVSHNGATKSIIDYTLEKVNEAKACLQSLTTDSRRQISNIKKEKLRTLIDLVTDDKMIENHSISTPFSCQFCKESFPGPIPLHQHERYLCKMNEEIKAVLQPHENIVPNKAGVFVDNKALLLSSVLSEKGLTSPINPYKDHMSVLKAYYAMNMEPNSDELLKISIAVGLPQEFVKEWFEQRKVYQYSNSRSPSLERTSKPLAPNSNPTTKDSLLPRSPVKPMDSITSPSIAELHNSVTSCDPPLRLTKSSHFTNIKAVDKLDHSRSNTPSPLNLSSTSSKNSHSSSYTPNSFSSEELQAEPLDLSLPKQMREPKGIIATKNKTKATSINLDHNSVSSSSENSDEPLNLTFIKKEFSNSNNLDNKSNNPVFGMNPFSAKPLYTPLPPQSAFPPATFMPPVQTSIPGLRPYPGLDQMSFLPHMAYTYPTGAATFADMQQRRKYQRKQGFQGDLLDGAQDYMSGLDDMTDSDSCLSRKKIKKTESGMYACDLCDKTFQKSSSLLRHKYEHTGKRPHQCQICKKAFKHKHHLIEHSRLHSGEKPYQCDKCGKRFSHSGSYSQHMNHRYSYCKREAEEREAAEREAREKGHLEPTELLMNRAYLQSITPQGYSDSEERESMPRDGESEKEHEKEGEEGYGKLRRRDGDEEEEEEEEESENKSMDTDPETIRDEEETGDHSMDDSSEDGKMETKSDHEEDNMEDGME</sequence>
<reference key="1">
    <citation type="journal article" date="1999" name="J. Biol. Chem.">
        <title>SIP1, a novel zinc finger/homeodomain repressor, interacts with Smad proteins and binds to 5'-CACCT sequences in candidate target genes.</title>
        <authorList>
            <person name="Verschueren K."/>
            <person name="Remacle J.E."/>
            <person name="Collart C."/>
            <person name="Kraft H."/>
            <person name="Baker B.S."/>
            <person name="Tylzanowski P."/>
            <person name="Nelles L."/>
            <person name="Wuytens G."/>
            <person name="Su M.-T."/>
            <person name="Bodmer R."/>
            <person name="Smith J.C."/>
            <person name="Huylebroeck D."/>
        </authorList>
    </citation>
    <scope>NUCLEOTIDE SEQUENCE [MRNA]</scope>
</reference>
<reference key="2">
    <citation type="journal article" date="2009" name="PLoS Biol.">
        <title>Lineage-specific biology revealed by a finished genome assembly of the mouse.</title>
        <authorList>
            <person name="Church D.M."/>
            <person name="Goodstadt L."/>
            <person name="Hillier L.W."/>
            <person name="Zody M.C."/>
            <person name="Goldstein S."/>
            <person name="She X."/>
            <person name="Bult C.J."/>
            <person name="Agarwala R."/>
            <person name="Cherry J.L."/>
            <person name="DiCuccio M."/>
            <person name="Hlavina W."/>
            <person name="Kapustin Y."/>
            <person name="Meric P."/>
            <person name="Maglott D."/>
            <person name="Birtle Z."/>
            <person name="Marques A.C."/>
            <person name="Graves T."/>
            <person name="Zhou S."/>
            <person name="Teague B."/>
            <person name="Potamousis K."/>
            <person name="Churas C."/>
            <person name="Place M."/>
            <person name="Herschleb J."/>
            <person name="Runnheim R."/>
            <person name="Forrest D."/>
            <person name="Amos-Landgraf J."/>
            <person name="Schwartz D.C."/>
            <person name="Cheng Z."/>
            <person name="Lindblad-Toh K."/>
            <person name="Eichler E.E."/>
            <person name="Ponting C.P."/>
        </authorList>
    </citation>
    <scope>NUCLEOTIDE SEQUENCE [LARGE SCALE GENOMIC DNA]</scope>
    <source>
        <strain>C57BL/6J</strain>
    </source>
</reference>
<reference key="3">
    <citation type="journal article" date="2004" name="Genome Res.">
        <title>The status, quality, and expansion of the NIH full-length cDNA project: the Mammalian Gene Collection (MGC).</title>
        <authorList>
            <consortium name="The MGC Project Team"/>
        </authorList>
    </citation>
    <scope>NUCLEOTIDE SEQUENCE [LARGE SCALE MRNA]</scope>
    <source>
        <strain>C57BL/6J</strain>
        <tissue>Brain</tissue>
    </source>
</reference>
<reference key="4">
    <citation type="journal article" date="2010" name="Cell">
        <title>A tissue-specific atlas of mouse protein phosphorylation and expression.</title>
        <authorList>
            <person name="Huttlin E.L."/>
            <person name="Jedrychowski M.P."/>
            <person name="Elias J.E."/>
            <person name="Goswami T."/>
            <person name="Rad R."/>
            <person name="Beausoleil S.A."/>
            <person name="Villen J."/>
            <person name="Haas W."/>
            <person name="Sowa M.E."/>
            <person name="Gygi S.P."/>
        </authorList>
    </citation>
    <scope>PHOSPHORYLATION [LARGE SCALE ANALYSIS] AT SER-356; SER-360; SER-364; SER-731; SER-780; SER-784; SER-1124 AND SER-1203</scope>
    <scope>IDENTIFICATION BY MASS SPECTROMETRY [LARGE SCALE ANALYSIS]</scope>
    <source>
        <tissue>Brain</tissue>
        <tissue>Brown adipose tissue</tissue>
        <tissue>Heart</tissue>
        <tissue>Kidney</tissue>
        <tissue>Lung</tissue>
        <tissue>Spleen</tissue>
    </source>
</reference>